<comment type="function">
    <text evidence="1">Catalyzes the attachment of alanine to tRNA(Ala) in a two-step reaction: alanine is first activated by ATP to form Ala-AMP and then transferred to the acceptor end of tRNA(Ala). Also edits incorrectly charged Ser-tRNA(Ala) and Gly-tRNA(Ala) via its editing domain.</text>
</comment>
<comment type="catalytic activity">
    <reaction evidence="1">
        <text>tRNA(Ala) + L-alanine + ATP = L-alanyl-tRNA(Ala) + AMP + diphosphate</text>
        <dbReference type="Rhea" id="RHEA:12540"/>
        <dbReference type="Rhea" id="RHEA-COMP:9657"/>
        <dbReference type="Rhea" id="RHEA-COMP:9923"/>
        <dbReference type="ChEBI" id="CHEBI:30616"/>
        <dbReference type="ChEBI" id="CHEBI:33019"/>
        <dbReference type="ChEBI" id="CHEBI:57972"/>
        <dbReference type="ChEBI" id="CHEBI:78442"/>
        <dbReference type="ChEBI" id="CHEBI:78497"/>
        <dbReference type="ChEBI" id="CHEBI:456215"/>
        <dbReference type="EC" id="6.1.1.7"/>
    </reaction>
</comment>
<comment type="cofactor">
    <cofactor evidence="1">
        <name>Zn(2+)</name>
        <dbReference type="ChEBI" id="CHEBI:29105"/>
    </cofactor>
    <text evidence="1">Binds 1 zinc ion per subunit.</text>
</comment>
<comment type="subcellular location">
    <subcellularLocation>
        <location evidence="1">Cytoplasm</location>
    </subcellularLocation>
</comment>
<comment type="domain">
    <text evidence="1">Consists of three domains; the N-terminal catalytic domain, the editing domain and the C-terminal C-Ala domain. The editing domain removes incorrectly charged amino acids, while the C-Ala domain, along with tRNA(Ala), serves as a bridge to cooperatively bring together the editing and aminoacylation centers thus stimulating deacylation of misacylated tRNAs.</text>
</comment>
<comment type="similarity">
    <text evidence="1">Belongs to the class-II aminoacyl-tRNA synthetase family.</text>
</comment>
<organism>
    <name type="scientific">Saccharolobus islandicus (strain Y.G.57.14 / Yellowstone #1)</name>
    <name type="common">Sulfolobus islandicus</name>
    <dbReference type="NCBI Taxonomy" id="439386"/>
    <lineage>
        <taxon>Archaea</taxon>
        <taxon>Thermoproteota</taxon>
        <taxon>Thermoprotei</taxon>
        <taxon>Sulfolobales</taxon>
        <taxon>Sulfolobaceae</taxon>
        <taxon>Saccharolobus</taxon>
    </lineage>
</organism>
<name>SYA_SACI7</name>
<keyword id="KW-0030">Aminoacyl-tRNA synthetase</keyword>
<keyword id="KW-0067">ATP-binding</keyword>
<keyword id="KW-0963">Cytoplasm</keyword>
<keyword id="KW-0436">Ligase</keyword>
<keyword id="KW-0479">Metal-binding</keyword>
<keyword id="KW-0547">Nucleotide-binding</keyword>
<keyword id="KW-0648">Protein biosynthesis</keyword>
<keyword id="KW-0694">RNA-binding</keyword>
<keyword id="KW-0820">tRNA-binding</keyword>
<keyword id="KW-0862">Zinc</keyword>
<protein>
    <recommendedName>
        <fullName evidence="1">Alanine--tRNA ligase</fullName>
        <ecNumber evidence="1">6.1.1.7</ecNumber>
    </recommendedName>
    <alternativeName>
        <fullName evidence="1">Alanyl-tRNA synthetase</fullName>
        <shortName evidence="1">AlaRS</shortName>
    </alternativeName>
</protein>
<reference key="1">
    <citation type="journal article" date="2009" name="Proc. Natl. Acad. Sci. U.S.A.">
        <title>Biogeography of the Sulfolobus islandicus pan-genome.</title>
        <authorList>
            <person name="Reno M.L."/>
            <person name="Held N.L."/>
            <person name="Fields C.J."/>
            <person name="Burke P.V."/>
            <person name="Whitaker R.J."/>
        </authorList>
    </citation>
    <scope>NUCLEOTIDE SEQUENCE [LARGE SCALE GENOMIC DNA]</scope>
    <source>
        <strain>Y.G.57.14 / Yellowstone #1</strain>
    </source>
</reference>
<sequence>MKASEEEYRLNFFIKNDFKRKICKSCKTPFWTRDEKKEYCSDIPCTDYYFFDINIKSQPLTVKEAREKFLSFFEKRGHTRISPKPVLARWREDLYLTIASIVDFQPHVTSGLVPPPANPLVVSQPSIRLEDIDNVGITFGRHLTTFEMAAHHAFNYPDHYVYWKEETTAYATEFFTKELGIPEEELNFKESWWEGGGNAGPCLEVTVGGLELATLVFMQYKITDNGNYTPLKLKIVDTGYGVERIAWITQKTPSAFHAIYGNLVYKFFNKIGVAYIDETLLKVASRFAGKIDPDNPDTIKIHRQMVSKELGIDIKAVEEELDRAAKVFQILDHTKTIMLMLADGLVPSNSGEGYLGRLVIRRALKVLRLLKSDVRLYELVKEQIDFWKEDFPQVLKNKDYILDAVELEQQRFEKILEKVPSIASTLARKSEITTEDLIQVYDSNGIPPDLLEEELKKKSVKFELPRNFYALVAKRHQTSTIKSAYDKVKLPKDMLEYITALQPTEKLYYKDQYMRSFEGKVLGVYKNYLILDKTTFYPEGGGQLGDTGLIIDEKSSKRYEVIDTQKVNDVIVHILKEEPSTIKVGDNVRGEINWERRYRLMRHHTVTHVILAAAKKVLGEHVWQAGAEKTPEKGRLDITHHKTLTEEEVKLIENYANSVISDRRQVKPLEMNRMEAEMKYGVSIYEGGVPNSATIRLLEIKDWDIESCGGTHVSNTSEIGAVKIINVERIQDGVIRLEYVAGPALVDYIRETQAKIVEASKIIGTSPDQLTSRLRRILNEIEEKNNLIIQYRRIIETELLNNLKPYEINSNKIYIIEGLGDEEENKEILRKLTSTDNTIAISISDNRLQIATSKNMRVDKIVEELLKGGGKGGGKGTFANVILNSKKSKEEIIEIVRKSL</sequence>
<feature type="chain" id="PRO_1000202051" description="Alanine--tRNA ligase">
    <location>
        <begin position="1"/>
        <end position="900"/>
    </location>
</feature>
<feature type="binding site" evidence="1">
    <location>
        <position position="604"/>
    </location>
    <ligand>
        <name>Zn(2+)</name>
        <dbReference type="ChEBI" id="CHEBI:29105"/>
    </ligand>
</feature>
<feature type="binding site" evidence="1">
    <location>
        <position position="608"/>
    </location>
    <ligand>
        <name>Zn(2+)</name>
        <dbReference type="ChEBI" id="CHEBI:29105"/>
    </ligand>
</feature>
<feature type="binding site" evidence="1">
    <location>
        <position position="708"/>
    </location>
    <ligand>
        <name>Zn(2+)</name>
        <dbReference type="ChEBI" id="CHEBI:29105"/>
    </ligand>
</feature>
<feature type="binding site" evidence="1">
    <location>
        <position position="712"/>
    </location>
    <ligand>
        <name>Zn(2+)</name>
        <dbReference type="ChEBI" id="CHEBI:29105"/>
    </ligand>
</feature>
<dbReference type="EC" id="6.1.1.7" evidence="1"/>
<dbReference type="EMBL" id="CP001403">
    <property type="protein sequence ID" value="ACP46137.1"/>
    <property type="molecule type" value="Genomic_DNA"/>
</dbReference>
<dbReference type="RefSeq" id="WP_012716389.1">
    <property type="nucleotide sequence ID" value="NC_012622.1"/>
</dbReference>
<dbReference type="SMR" id="C3N7E3"/>
<dbReference type="GeneID" id="7807284"/>
<dbReference type="KEGG" id="siy:YG5714_1881"/>
<dbReference type="HOGENOM" id="CLU_004485_4_0_2"/>
<dbReference type="Proteomes" id="UP000002308">
    <property type="component" value="Chromosome"/>
</dbReference>
<dbReference type="GO" id="GO:0005737">
    <property type="term" value="C:cytoplasm"/>
    <property type="evidence" value="ECO:0007669"/>
    <property type="project" value="UniProtKB-SubCell"/>
</dbReference>
<dbReference type="GO" id="GO:0004813">
    <property type="term" value="F:alanine-tRNA ligase activity"/>
    <property type="evidence" value="ECO:0007669"/>
    <property type="project" value="UniProtKB-UniRule"/>
</dbReference>
<dbReference type="GO" id="GO:0002161">
    <property type="term" value="F:aminoacyl-tRNA deacylase activity"/>
    <property type="evidence" value="ECO:0007669"/>
    <property type="project" value="TreeGrafter"/>
</dbReference>
<dbReference type="GO" id="GO:0005524">
    <property type="term" value="F:ATP binding"/>
    <property type="evidence" value="ECO:0007669"/>
    <property type="project" value="UniProtKB-UniRule"/>
</dbReference>
<dbReference type="GO" id="GO:0000049">
    <property type="term" value="F:tRNA binding"/>
    <property type="evidence" value="ECO:0007669"/>
    <property type="project" value="UniProtKB-KW"/>
</dbReference>
<dbReference type="GO" id="GO:0008270">
    <property type="term" value="F:zinc ion binding"/>
    <property type="evidence" value="ECO:0007669"/>
    <property type="project" value="UniProtKB-UniRule"/>
</dbReference>
<dbReference type="GO" id="GO:0006419">
    <property type="term" value="P:alanyl-tRNA aminoacylation"/>
    <property type="evidence" value="ECO:0007669"/>
    <property type="project" value="UniProtKB-UniRule"/>
</dbReference>
<dbReference type="CDD" id="cd00673">
    <property type="entry name" value="AlaRS_core"/>
    <property type="match status" value="1"/>
</dbReference>
<dbReference type="FunFam" id="3.30.54.20:FF:000004">
    <property type="entry name" value="Alanine--tRNA ligase"/>
    <property type="match status" value="1"/>
</dbReference>
<dbReference type="FunFam" id="3.30.930.10:FF:000056">
    <property type="entry name" value="Alanine--tRNA ligase"/>
    <property type="match status" value="1"/>
</dbReference>
<dbReference type="FunFam" id="3.30.980.10:FF:000004">
    <property type="entry name" value="Alanine--tRNA ligase, cytoplasmic"/>
    <property type="match status" value="1"/>
</dbReference>
<dbReference type="Gene3D" id="2.40.30.130">
    <property type="match status" value="1"/>
</dbReference>
<dbReference type="Gene3D" id="3.30.54.20">
    <property type="match status" value="1"/>
</dbReference>
<dbReference type="Gene3D" id="3.30.930.10">
    <property type="entry name" value="Bira Bifunctional Protein, Domain 2"/>
    <property type="match status" value="1"/>
</dbReference>
<dbReference type="Gene3D" id="3.30.980.10">
    <property type="entry name" value="Threonyl-trna Synthetase, Chain A, domain 2"/>
    <property type="match status" value="1"/>
</dbReference>
<dbReference type="HAMAP" id="MF_00036_A">
    <property type="entry name" value="Ala_tRNA_synth_A"/>
    <property type="match status" value="1"/>
</dbReference>
<dbReference type="InterPro" id="IPR045864">
    <property type="entry name" value="aa-tRNA-synth_II/BPL/LPL"/>
</dbReference>
<dbReference type="InterPro" id="IPR002318">
    <property type="entry name" value="Ala-tRNA-lgiase_IIc"/>
</dbReference>
<dbReference type="InterPro" id="IPR018162">
    <property type="entry name" value="Ala-tRNA-ligase_IIc_anticod-bd"/>
</dbReference>
<dbReference type="InterPro" id="IPR018165">
    <property type="entry name" value="Ala-tRNA-synth_IIc_core"/>
</dbReference>
<dbReference type="InterPro" id="IPR018164">
    <property type="entry name" value="Ala-tRNA-synth_IIc_N"/>
</dbReference>
<dbReference type="InterPro" id="IPR022429">
    <property type="entry name" value="Ala-tRNA_lgiase_arc"/>
</dbReference>
<dbReference type="InterPro" id="IPR050058">
    <property type="entry name" value="Ala-tRNA_ligase"/>
</dbReference>
<dbReference type="InterPro" id="IPR018163">
    <property type="entry name" value="Thr/Ala-tRNA-synth_IIc_edit"/>
</dbReference>
<dbReference type="InterPro" id="IPR009000">
    <property type="entry name" value="Transl_B-barrel_sf"/>
</dbReference>
<dbReference type="InterPro" id="IPR012947">
    <property type="entry name" value="tRNA_SAD"/>
</dbReference>
<dbReference type="NCBIfam" id="TIGR03683">
    <property type="entry name" value="A-tRNA_syn_arch"/>
    <property type="match status" value="1"/>
</dbReference>
<dbReference type="NCBIfam" id="TIGR00344">
    <property type="entry name" value="alaS"/>
    <property type="match status" value="1"/>
</dbReference>
<dbReference type="PANTHER" id="PTHR11777:SF9">
    <property type="entry name" value="ALANINE--TRNA LIGASE, CYTOPLASMIC"/>
    <property type="match status" value="1"/>
</dbReference>
<dbReference type="PANTHER" id="PTHR11777">
    <property type="entry name" value="ALANYL-TRNA SYNTHETASE"/>
    <property type="match status" value="1"/>
</dbReference>
<dbReference type="Pfam" id="PF01411">
    <property type="entry name" value="tRNA-synt_2c"/>
    <property type="match status" value="1"/>
</dbReference>
<dbReference type="Pfam" id="PF07973">
    <property type="entry name" value="tRNA_SAD"/>
    <property type="match status" value="1"/>
</dbReference>
<dbReference type="PRINTS" id="PR00980">
    <property type="entry name" value="TRNASYNTHALA"/>
</dbReference>
<dbReference type="SMART" id="SM00863">
    <property type="entry name" value="tRNA_SAD"/>
    <property type="match status" value="1"/>
</dbReference>
<dbReference type="SUPFAM" id="SSF55681">
    <property type="entry name" value="Class II aaRS and biotin synthetases"/>
    <property type="match status" value="1"/>
</dbReference>
<dbReference type="SUPFAM" id="SSF101353">
    <property type="entry name" value="Putative anticodon-binding domain of alanyl-tRNA synthetase (AlaRS)"/>
    <property type="match status" value="1"/>
</dbReference>
<dbReference type="SUPFAM" id="SSF55186">
    <property type="entry name" value="ThrRS/AlaRS common domain"/>
    <property type="match status" value="1"/>
</dbReference>
<dbReference type="SUPFAM" id="SSF50447">
    <property type="entry name" value="Translation proteins"/>
    <property type="match status" value="1"/>
</dbReference>
<dbReference type="PROSITE" id="PS50860">
    <property type="entry name" value="AA_TRNA_LIGASE_II_ALA"/>
    <property type="match status" value="1"/>
</dbReference>
<proteinExistence type="inferred from homology"/>
<evidence type="ECO:0000255" key="1">
    <source>
        <dbReference type="HAMAP-Rule" id="MF_00036"/>
    </source>
</evidence>
<gene>
    <name evidence="1" type="primary">alaS</name>
    <name type="ordered locus">YG5714_1881</name>
</gene>
<accession>C3N7E3</accession>